<feature type="chain" id="PRO_1000133252" description="Protein SprT">
    <location>
        <begin position="1"/>
        <end position="165"/>
    </location>
</feature>
<feature type="domain" description="SprT-like" evidence="1">
    <location>
        <begin position="22"/>
        <end position="163"/>
    </location>
</feature>
<feature type="active site" evidence="1">
    <location>
        <position position="79"/>
    </location>
</feature>
<feature type="binding site" evidence="1">
    <location>
        <position position="78"/>
    </location>
    <ligand>
        <name>Zn(2+)</name>
        <dbReference type="ChEBI" id="CHEBI:29105"/>
    </ligand>
</feature>
<feature type="binding site" evidence="1">
    <location>
        <position position="82"/>
    </location>
    <ligand>
        <name>Zn(2+)</name>
        <dbReference type="ChEBI" id="CHEBI:29105"/>
    </ligand>
</feature>
<evidence type="ECO:0000255" key="1">
    <source>
        <dbReference type="HAMAP-Rule" id="MF_00746"/>
    </source>
</evidence>
<sequence length="165" mass="19243">MKTPRLPIAIQQAVMRRLRENLAQANLKLDRHYPEPKLVYTQRGTSAGTAWLESYEIRLNPVLLLENIDTFIAEVVPHELAHLLVWKHFGRKAPHGKEWKWMMESVLGVPARRTHQFALQSVRRNTFPYHCQCQQHQLTVRRHNRVVRGEAVYRCVHCGEPLVAG</sequence>
<keyword id="KW-0963">Cytoplasm</keyword>
<keyword id="KW-0479">Metal-binding</keyword>
<keyword id="KW-0862">Zinc</keyword>
<comment type="cofactor">
    <cofactor evidence="1">
        <name>Zn(2+)</name>
        <dbReference type="ChEBI" id="CHEBI:29105"/>
    </cofactor>
    <text evidence="1">Binds 1 zinc ion.</text>
</comment>
<comment type="subcellular location">
    <subcellularLocation>
        <location evidence="1">Cytoplasm</location>
    </subcellularLocation>
</comment>
<comment type="similarity">
    <text evidence="1">Belongs to the SprT family.</text>
</comment>
<name>SPRT_SALHS</name>
<proteinExistence type="inferred from homology"/>
<dbReference type="EMBL" id="CP001120">
    <property type="protein sequence ID" value="ACF69457.1"/>
    <property type="molecule type" value="Genomic_DNA"/>
</dbReference>
<dbReference type="RefSeq" id="WP_000856775.1">
    <property type="nucleotide sequence ID" value="NC_011083.1"/>
</dbReference>
<dbReference type="KEGG" id="seh:SeHA_C3331"/>
<dbReference type="HOGENOM" id="CLU_113336_0_1_6"/>
<dbReference type="Proteomes" id="UP000001866">
    <property type="component" value="Chromosome"/>
</dbReference>
<dbReference type="GO" id="GO:0005737">
    <property type="term" value="C:cytoplasm"/>
    <property type="evidence" value="ECO:0007669"/>
    <property type="project" value="UniProtKB-SubCell"/>
</dbReference>
<dbReference type="GO" id="GO:0008270">
    <property type="term" value="F:zinc ion binding"/>
    <property type="evidence" value="ECO:0007669"/>
    <property type="project" value="UniProtKB-UniRule"/>
</dbReference>
<dbReference type="GO" id="GO:0006950">
    <property type="term" value="P:response to stress"/>
    <property type="evidence" value="ECO:0007669"/>
    <property type="project" value="UniProtKB-ARBA"/>
</dbReference>
<dbReference type="HAMAP" id="MF_00746">
    <property type="entry name" value="SprT"/>
    <property type="match status" value="1"/>
</dbReference>
<dbReference type="InterPro" id="IPR006640">
    <property type="entry name" value="SprT-like_domain"/>
</dbReference>
<dbReference type="InterPro" id="IPR035240">
    <property type="entry name" value="SprT_Zn_ribbon"/>
</dbReference>
<dbReference type="InterPro" id="IPR023483">
    <property type="entry name" value="Uncharacterised_SprT"/>
</dbReference>
<dbReference type="NCBIfam" id="NF003421">
    <property type="entry name" value="PRK04860.1"/>
    <property type="match status" value="1"/>
</dbReference>
<dbReference type="PANTHER" id="PTHR38773">
    <property type="entry name" value="PROTEIN SPRT"/>
    <property type="match status" value="1"/>
</dbReference>
<dbReference type="PANTHER" id="PTHR38773:SF1">
    <property type="entry name" value="PROTEIN SPRT"/>
    <property type="match status" value="1"/>
</dbReference>
<dbReference type="Pfam" id="PF10263">
    <property type="entry name" value="SprT-like"/>
    <property type="match status" value="1"/>
</dbReference>
<dbReference type="Pfam" id="PF17283">
    <property type="entry name" value="Zn_ribbon_SprT"/>
    <property type="match status" value="1"/>
</dbReference>
<dbReference type="SMART" id="SM00731">
    <property type="entry name" value="SprT"/>
    <property type="match status" value="1"/>
</dbReference>
<dbReference type="PROSITE" id="PS00142">
    <property type="entry name" value="ZINC_PROTEASE"/>
    <property type="match status" value="1"/>
</dbReference>
<gene>
    <name evidence="1" type="primary">sprT</name>
    <name type="ordered locus">SeHA_C3331</name>
</gene>
<organism>
    <name type="scientific">Salmonella heidelberg (strain SL476)</name>
    <dbReference type="NCBI Taxonomy" id="454169"/>
    <lineage>
        <taxon>Bacteria</taxon>
        <taxon>Pseudomonadati</taxon>
        <taxon>Pseudomonadota</taxon>
        <taxon>Gammaproteobacteria</taxon>
        <taxon>Enterobacterales</taxon>
        <taxon>Enterobacteriaceae</taxon>
        <taxon>Salmonella</taxon>
    </lineage>
</organism>
<protein>
    <recommendedName>
        <fullName evidence="1">Protein SprT</fullName>
    </recommendedName>
</protein>
<reference key="1">
    <citation type="journal article" date="2011" name="J. Bacteriol.">
        <title>Comparative genomics of 28 Salmonella enterica isolates: evidence for CRISPR-mediated adaptive sublineage evolution.</title>
        <authorList>
            <person name="Fricke W.F."/>
            <person name="Mammel M.K."/>
            <person name="McDermott P.F."/>
            <person name="Tartera C."/>
            <person name="White D.G."/>
            <person name="Leclerc J.E."/>
            <person name="Ravel J."/>
            <person name="Cebula T.A."/>
        </authorList>
    </citation>
    <scope>NUCLEOTIDE SEQUENCE [LARGE SCALE GENOMIC DNA]</scope>
    <source>
        <strain>SL476</strain>
    </source>
</reference>
<accession>B4THH7</accession>